<dbReference type="EMBL" id="AM922298">
    <property type="protein sequence ID" value="CAP58280.1"/>
    <property type="molecule type" value="mRNA"/>
</dbReference>
<dbReference type="EMBL" id="BC135637">
    <property type="protein sequence ID" value="AAI35638.1"/>
    <property type="molecule type" value="mRNA"/>
</dbReference>
<dbReference type="RefSeq" id="NP_001093703.1">
    <property type="nucleotide sequence ID" value="NM_001100233.1"/>
</dbReference>
<dbReference type="SMR" id="A4QNG3"/>
<dbReference type="FunCoup" id="A4QNG3">
    <property type="interactions" value="23"/>
</dbReference>
<dbReference type="STRING" id="8364.ENSXETP00000012534"/>
<dbReference type="PaxDb" id="8364-ENSXETP00000049107"/>
<dbReference type="DNASU" id="100101715"/>
<dbReference type="GeneID" id="100101715"/>
<dbReference type="KEGG" id="xtr:100101715"/>
<dbReference type="AGR" id="Xenbase:XB-GENE-485370"/>
<dbReference type="CTD" id="8403"/>
<dbReference type="Xenbase" id="XB-GENE-485370">
    <property type="gene designation" value="sox14"/>
</dbReference>
<dbReference type="eggNOG" id="KOG0527">
    <property type="taxonomic scope" value="Eukaryota"/>
</dbReference>
<dbReference type="HOGENOM" id="CLU_021123_3_1_1"/>
<dbReference type="InParanoid" id="A4QNG3"/>
<dbReference type="OMA" id="KMTQEMP"/>
<dbReference type="OrthoDB" id="6247875at2759"/>
<dbReference type="PhylomeDB" id="A4QNG3"/>
<dbReference type="TreeFam" id="TF351735"/>
<dbReference type="Proteomes" id="UP000008143">
    <property type="component" value="Chromosome 5"/>
</dbReference>
<dbReference type="Bgee" id="ENSXETG00000034566">
    <property type="expression patterns" value="Expressed in brain and 1 other cell type or tissue"/>
</dbReference>
<dbReference type="GO" id="GO:0005634">
    <property type="term" value="C:nucleus"/>
    <property type="evidence" value="ECO:0007669"/>
    <property type="project" value="UniProtKB-SubCell"/>
</dbReference>
<dbReference type="GO" id="GO:0043565">
    <property type="term" value="F:sequence-specific DNA binding"/>
    <property type="evidence" value="ECO:0000250"/>
    <property type="project" value="UniProtKB"/>
</dbReference>
<dbReference type="GO" id="GO:0045892">
    <property type="term" value="P:negative regulation of DNA-templated transcription"/>
    <property type="evidence" value="ECO:0000250"/>
    <property type="project" value="UniProtKB"/>
</dbReference>
<dbReference type="GO" id="GO:0000122">
    <property type="term" value="P:negative regulation of transcription by RNA polymerase II"/>
    <property type="evidence" value="ECO:0000250"/>
    <property type="project" value="UniProtKB"/>
</dbReference>
<dbReference type="GO" id="GO:0007399">
    <property type="term" value="P:nervous system development"/>
    <property type="evidence" value="ECO:0000250"/>
    <property type="project" value="UniProtKB"/>
</dbReference>
<dbReference type="CDD" id="cd01388">
    <property type="entry name" value="HMG-box_SoxB"/>
    <property type="match status" value="1"/>
</dbReference>
<dbReference type="FunFam" id="1.10.30.10:FF:000002">
    <property type="entry name" value="transcription factor Sox-2"/>
    <property type="match status" value="1"/>
</dbReference>
<dbReference type="Gene3D" id="1.10.30.10">
    <property type="entry name" value="High mobility group box domain"/>
    <property type="match status" value="1"/>
</dbReference>
<dbReference type="InterPro" id="IPR009071">
    <property type="entry name" value="HMG_box_dom"/>
</dbReference>
<dbReference type="InterPro" id="IPR036910">
    <property type="entry name" value="HMG_box_dom_sf"/>
</dbReference>
<dbReference type="InterPro" id="IPR022097">
    <property type="entry name" value="SOX_fam"/>
</dbReference>
<dbReference type="InterPro" id="IPR050140">
    <property type="entry name" value="SRY-related_HMG-box_TF-like"/>
</dbReference>
<dbReference type="PANTHER" id="PTHR10270">
    <property type="entry name" value="SOX TRANSCRIPTION FACTOR"/>
    <property type="match status" value="1"/>
</dbReference>
<dbReference type="PANTHER" id="PTHR10270:SF107">
    <property type="entry name" value="TRANSCRIPTION FACTOR SOX-14"/>
    <property type="match status" value="1"/>
</dbReference>
<dbReference type="Pfam" id="PF00505">
    <property type="entry name" value="HMG_box"/>
    <property type="match status" value="1"/>
</dbReference>
<dbReference type="Pfam" id="PF12336">
    <property type="entry name" value="SOXp"/>
    <property type="match status" value="1"/>
</dbReference>
<dbReference type="SMART" id="SM00398">
    <property type="entry name" value="HMG"/>
    <property type="match status" value="1"/>
</dbReference>
<dbReference type="SUPFAM" id="SSF47095">
    <property type="entry name" value="HMG-box"/>
    <property type="match status" value="1"/>
</dbReference>
<dbReference type="PROSITE" id="PS50118">
    <property type="entry name" value="HMG_BOX_2"/>
    <property type="match status" value="1"/>
</dbReference>
<reference evidence="5" key="1">
    <citation type="submission" date="2007-12" db="EMBL/GenBank/DDBJ databases">
        <authorList>
            <person name="Grammer T."/>
            <person name="Harland R."/>
        </authorList>
    </citation>
    <scope>NUCLEOTIDE SEQUENCE [MRNA]</scope>
    <source>
        <tissue evidence="5">Tadpole</tissue>
    </source>
</reference>
<reference evidence="5" key="2">
    <citation type="submission" date="2007-03" db="EMBL/GenBank/DDBJ databases">
        <authorList>
            <consortium name="NIH - Xenopus Gene Collection (XGC) project"/>
        </authorList>
    </citation>
    <scope>NUCLEOTIDE SEQUENCE [LARGE SCALE MRNA]</scope>
    <source>
        <tissue evidence="5">Tadpole</tissue>
    </source>
</reference>
<keyword id="KW-0217">Developmental protein</keyword>
<keyword id="KW-0238">DNA-binding</keyword>
<keyword id="KW-0539">Nucleus</keyword>
<keyword id="KW-1185">Reference proteome</keyword>
<keyword id="KW-0678">Repressor</keyword>
<keyword id="KW-0804">Transcription</keyword>
<keyword id="KW-0805">Transcription regulation</keyword>
<name>SOX14_XENTR</name>
<proteinExistence type="evidence at transcript level"/>
<sequence>MSKPVDHIKRPMNAFMVWSRGQRRKMAQENPKMHNSEISKRLGAEWKLLSEAEKRPYIDEAKRLRAQHMKEHPDYKYRPRRKPKNLLKKDRYVFPLPYLGDHDPLKTGLSMSATDSLLGASEKARAFLPPTSAPYSLLDPSQFSSTTIQKMTEMPHTLAASTLPYASTLGYQNGAFGGLSCPSQHTHTHPSPTNPGYVVPCNCSAWSASNLQPPVAYILFPGMTKAGLDPYSSAHTAAM</sequence>
<accession>A4QNG3</accession>
<gene>
    <name evidence="4" type="primary">sox14</name>
</gene>
<protein>
    <recommendedName>
        <fullName evidence="2">Transcription factor Sox-14</fullName>
    </recommendedName>
    <alternativeName>
        <fullName>SRY (sex determining region Y)-box 14</fullName>
    </alternativeName>
</protein>
<organism>
    <name type="scientific">Xenopus tropicalis</name>
    <name type="common">Western clawed frog</name>
    <name type="synonym">Silurana tropicalis</name>
    <dbReference type="NCBI Taxonomy" id="8364"/>
    <lineage>
        <taxon>Eukaryota</taxon>
        <taxon>Metazoa</taxon>
        <taxon>Chordata</taxon>
        <taxon>Craniata</taxon>
        <taxon>Vertebrata</taxon>
        <taxon>Euteleostomi</taxon>
        <taxon>Amphibia</taxon>
        <taxon>Batrachia</taxon>
        <taxon>Anura</taxon>
        <taxon>Pipoidea</taxon>
        <taxon>Pipidae</taxon>
        <taxon>Xenopodinae</taxon>
        <taxon>Xenopus</taxon>
        <taxon>Silurana</taxon>
    </lineage>
</organism>
<evidence type="ECO:0000250" key="1">
    <source>
        <dbReference type="UniProtKB" id="B0ZTE2"/>
    </source>
</evidence>
<evidence type="ECO:0000250" key="2">
    <source>
        <dbReference type="UniProtKB" id="Q9W7R6"/>
    </source>
</evidence>
<evidence type="ECO:0000255" key="3">
    <source>
        <dbReference type="PROSITE-ProRule" id="PRU00267"/>
    </source>
</evidence>
<evidence type="ECO:0000312" key="4">
    <source>
        <dbReference type="EMBL" id="AAI35638.1"/>
    </source>
</evidence>
<evidence type="ECO:0000312" key="5">
    <source>
        <dbReference type="EMBL" id="CAP58280.1"/>
    </source>
</evidence>
<feature type="chain" id="PRO_0000378070" description="Transcription factor Sox-14">
    <location>
        <begin position="1"/>
        <end position="239"/>
    </location>
</feature>
<feature type="DNA-binding region" description="HMG box" evidence="3">
    <location>
        <begin position="8"/>
        <end position="76"/>
    </location>
</feature>
<comment type="function">
    <text evidence="1 2">Acts as a negative regulator of transcription. May function as a switch in neuronal development (By similarity).</text>
</comment>
<comment type="subcellular location">
    <subcellularLocation>
        <location evidence="2 3">Nucleus</location>
    </subcellularLocation>
</comment>